<evidence type="ECO:0000255" key="1">
    <source>
        <dbReference type="HAMAP-Rule" id="MF_01588"/>
    </source>
</evidence>
<evidence type="ECO:0000256" key="2">
    <source>
        <dbReference type="SAM" id="MobiDB-lite"/>
    </source>
</evidence>
<sequence>MTVQKPIESLSPAQAKREHRRLGEQITEHDRLYYQEDAPRVSDAEYDALRRRYEALETAFPELVSAESLTKKIGAAPAEKFAKIIHKVPMLSLANIFSDEEVGEFVARVRRFLGLGADAPLAISAEPKIDGLSCSLRYEGGYLVQAATRGDGYEGEDVTANVRTIQEIPHQLQGHAPEILEVRGEVYMTHADFAALNERQEAAGKTIFANPRNSAAGSLRQLDPKVTAGRPLHFFAYAWGEASEEPADTQMGMVTAFKAFGLPVNPLMQLCHSAEDLIAHYHDIEARRALLDYDIDGVVYKVNSIALQKRLGFVSRAPRWATAHKFPAEKAVTLLRDIEIQVGRTGALTPVARLEPITVGGVVVSNATLHNEDEIARKDIRIGDMVMIQRAGDVIPQILGPILDKRPQDAQPYEFPQVCPVCGSAAIREIDPKTGTADVVRRCTGGLVCAAQVVERLKHFASRNAFDIEGLGDKQIEQFYHDGLIHTPVDIFTLQERDARSLKKLKDREGYGETSVRNLFQAIEARRHIPVNRFIYALGIRHVGETNARRAARAFGTFDALRAVASRAEEGSEERSELTNVEGFGPVVAEAIFDFFHEQHNQDVLDGLLEQVTPEPMEAVAKESPVAGKTVVFTGALEHMTREEAKAQAERLGAKVAGSVSKKTDLVVAGPGAGSKLAKAAELNIETISEEDWLKLVGE</sequence>
<organism>
    <name type="scientific">Beijerinckia indica subsp. indica (strain ATCC 9039 / DSM 1715 / NCIMB 8712)</name>
    <dbReference type="NCBI Taxonomy" id="395963"/>
    <lineage>
        <taxon>Bacteria</taxon>
        <taxon>Pseudomonadati</taxon>
        <taxon>Pseudomonadota</taxon>
        <taxon>Alphaproteobacteria</taxon>
        <taxon>Hyphomicrobiales</taxon>
        <taxon>Beijerinckiaceae</taxon>
        <taxon>Beijerinckia</taxon>
    </lineage>
</organism>
<proteinExistence type="inferred from homology"/>
<gene>
    <name evidence="1" type="primary">ligA</name>
    <name type="ordered locus">Bind_0706</name>
</gene>
<reference key="1">
    <citation type="journal article" date="2010" name="J. Bacteriol.">
        <title>Complete genome sequence of Beijerinckia indica subsp. indica.</title>
        <authorList>
            <person name="Tamas I."/>
            <person name="Dedysh S.N."/>
            <person name="Liesack W."/>
            <person name="Stott M.B."/>
            <person name="Alam M."/>
            <person name="Murrell J.C."/>
            <person name="Dunfield P.F."/>
        </authorList>
    </citation>
    <scope>NUCLEOTIDE SEQUENCE [LARGE SCALE GENOMIC DNA]</scope>
    <source>
        <strain>ATCC 9039 / DSM 1715 / NCIMB 8712</strain>
    </source>
</reference>
<feature type="chain" id="PRO_0000380306" description="DNA ligase">
    <location>
        <begin position="1"/>
        <end position="699"/>
    </location>
</feature>
<feature type="domain" description="BRCT" evidence="1">
    <location>
        <begin position="621"/>
        <end position="699"/>
    </location>
</feature>
<feature type="region of interest" description="Disordered" evidence="2">
    <location>
        <begin position="1"/>
        <end position="20"/>
    </location>
</feature>
<feature type="active site" description="N6-AMP-lysine intermediate" evidence="1">
    <location>
        <position position="128"/>
    </location>
</feature>
<feature type="binding site" evidence="1">
    <location>
        <begin position="43"/>
        <end position="47"/>
    </location>
    <ligand>
        <name>NAD(+)</name>
        <dbReference type="ChEBI" id="CHEBI:57540"/>
    </ligand>
</feature>
<feature type="binding site" evidence="1">
    <location>
        <begin position="92"/>
        <end position="93"/>
    </location>
    <ligand>
        <name>NAD(+)</name>
        <dbReference type="ChEBI" id="CHEBI:57540"/>
    </ligand>
</feature>
<feature type="binding site" evidence="1">
    <location>
        <position position="126"/>
    </location>
    <ligand>
        <name>NAD(+)</name>
        <dbReference type="ChEBI" id="CHEBI:57540"/>
    </ligand>
</feature>
<feature type="binding site" evidence="1">
    <location>
        <position position="149"/>
    </location>
    <ligand>
        <name>NAD(+)</name>
        <dbReference type="ChEBI" id="CHEBI:57540"/>
    </ligand>
</feature>
<feature type="binding site" evidence="1">
    <location>
        <position position="185"/>
    </location>
    <ligand>
        <name>NAD(+)</name>
        <dbReference type="ChEBI" id="CHEBI:57540"/>
    </ligand>
</feature>
<feature type="binding site" evidence="1">
    <location>
        <position position="301"/>
    </location>
    <ligand>
        <name>NAD(+)</name>
        <dbReference type="ChEBI" id="CHEBI:57540"/>
    </ligand>
</feature>
<feature type="binding site" evidence="1">
    <location>
        <position position="325"/>
    </location>
    <ligand>
        <name>NAD(+)</name>
        <dbReference type="ChEBI" id="CHEBI:57540"/>
    </ligand>
</feature>
<feature type="binding site" evidence="1">
    <location>
        <position position="419"/>
    </location>
    <ligand>
        <name>Zn(2+)</name>
        <dbReference type="ChEBI" id="CHEBI:29105"/>
    </ligand>
</feature>
<feature type="binding site" evidence="1">
    <location>
        <position position="422"/>
    </location>
    <ligand>
        <name>Zn(2+)</name>
        <dbReference type="ChEBI" id="CHEBI:29105"/>
    </ligand>
</feature>
<feature type="binding site" evidence="1">
    <location>
        <position position="443"/>
    </location>
    <ligand>
        <name>Zn(2+)</name>
        <dbReference type="ChEBI" id="CHEBI:29105"/>
    </ligand>
</feature>
<feature type="binding site" evidence="1">
    <location>
        <position position="449"/>
    </location>
    <ligand>
        <name>Zn(2+)</name>
        <dbReference type="ChEBI" id="CHEBI:29105"/>
    </ligand>
</feature>
<accession>B2IGH4</accession>
<keyword id="KW-0227">DNA damage</keyword>
<keyword id="KW-0234">DNA repair</keyword>
<keyword id="KW-0235">DNA replication</keyword>
<keyword id="KW-0436">Ligase</keyword>
<keyword id="KW-0460">Magnesium</keyword>
<keyword id="KW-0464">Manganese</keyword>
<keyword id="KW-0479">Metal-binding</keyword>
<keyword id="KW-0520">NAD</keyword>
<keyword id="KW-1185">Reference proteome</keyword>
<keyword id="KW-0862">Zinc</keyword>
<comment type="function">
    <text evidence="1">DNA ligase that catalyzes the formation of phosphodiester linkages between 5'-phosphoryl and 3'-hydroxyl groups in double-stranded DNA using NAD as a coenzyme and as the energy source for the reaction. It is essential for DNA replication and repair of damaged DNA.</text>
</comment>
<comment type="catalytic activity">
    <reaction evidence="1">
        <text>NAD(+) + (deoxyribonucleotide)n-3'-hydroxyl + 5'-phospho-(deoxyribonucleotide)m = (deoxyribonucleotide)n+m + AMP + beta-nicotinamide D-nucleotide.</text>
        <dbReference type="EC" id="6.5.1.2"/>
    </reaction>
</comment>
<comment type="cofactor">
    <cofactor evidence="1">
        <name>Mg(2+)</name>
        <dbReference type="ChEBI" id="CHEBI:18420"/>
    </cofactor>
    <cofactor evidence="1">
        <name>Mn(2+)</name>
        <dbReference type="ChEBI" id="CHEBI:29035"/>
    </cofactor>
</comment>
<comment type="similarity">
    <text evidence="1">Belongs to the NAD-dependent DNA ligase family. LigA subfamily.</text>
</comment>
<protein>
    <recommendedName>
        <fullName evidence="1">DNA ligase</fullName>
        <ecNumber evidence="1">6.5.1.2</ecNumber>
    </recommendedName>
    <alternativeName>
        <fullName evidence="1">Polydeoxyribonucleotide synthase [NAD(+)]</fullName>
    </alternativeName>
</protein>
<dbReference type="EC" id="6.5.1.2" evidence="1"/>
<dbReference type="EMBL" id="CP001016">
    <property type="protein sequence ID" value="ACB94356.1"/>
    <property type="molecule type" value="Genomic_DNA"/>
</dbReference>
<dbReference type="RefSeq" id="WP_012383713.1">
    <property type="nucleotide sequence ID" value="NC_010581.1"/>
</dbReference>
<dbReference type="SMR" id="B2IGH4"/>
<dbReference type="STRING" id="395963.Bind_0706"/>
<dbReference type="KEGG" id="bid:Bind_0706"/>
<dbReference type="eggNOG" id="COG0272">
    <property type="taxonomic scope" value="Bacteria"/>
</dbReference>
<dbReference type="HOGENOM" id="CLU_007764_2_1_5"/>
<dbReference type="OrthoDB" id="9759736at2"/>
<dbReference type="Proteomes" id="UP000001695">
    <property type="component" value="Chromosome"/>
</dbReference>
<dbReference type="GO" id="GO:0005829">
    <property type="term" value="C:cytosol"/>
    <property type="evidence" value="ECO:0007669"/>
    <property type="project" value="TreeGrafter"/>
</dbReference>
<dbReference type="GO" id="GO:0003911">
    <property type="term" value="F:DNA ligase (NAD+) activity"/>
    <property type="evidence" value="ECO:0007669"/>
    <property type="project" value="UniProtKB-UniRule"/>
</dbReference>
<dbReference type="GO" id="GO:0046872">
    <property type="term" value="F:metal ion binding"/>
    <property type="evidence" value="ECO:0007669"/>
    <property type="project" value="UniProtKB-KW"/>
</dbReference>
<dbReference type="GO" id="GO:0006281">
    <property type="term" value="P:DNA repair"/>
    <property type="evidence" value="ECO:0007669"/>
    <property type="project" value="UniProtKB-KW"/>
</dbReference>
<dbReference type="GO" id="GO:0006260">
    <property type="term" value="P:DNA replication"/>
    <property type="evidence" value="ECO:0007669"/>
    <property type="project" value="UniProtKB-KW"/>
</dbReference>
<dbReference type="CDD" id="cd17748">
    <property type="entry name" value="BRCT_DNA_ligase_like"/>
    <property type="match status" value="1"/>
</dbReference>
<dbReference type="CDD" id="cd00114">
    <property type="entry name" value="LIGANc"/>
    <property type="match status" value="1"/>
</dbReference>
<dbReference type="FunFam" id="1.10.150.20:FF:000007">
    <property type="entry name" value="DNA ligase"/>
    <property type="match status" value="1"/>
</dbReference>
<dbReference type="FunFam" id="2.40.50.140:FF:000012">
    <property type="entry name" value="DNA ligase"/>
    <property type="match status" value="1"/>
</dbReference>
<dbReference type="FunFam" id="3.30.470.30:FF:000001">
    <property type="entry name" value="DNA ligase"/>
    <property type="match status" value="1"/>
</dbReference>
<dbReference type="Gene3D" id="6.20.10.30">
    <property type="match status" value="1"/>
</dbReference>
<dbReference type="Gene3D" id="1.10.150.20">
    <property type="entry name" value="5' to 3' exonuclease, C-terminal subdomain"/>
    <property type="match status" value="2"/>
</dbReference>
<dbReference type="Gene3D" id="3.40.50.10190">
    <property type="entry name" value="BRCT domain"/>
    <property type="match status" value="1"/>
</dbReference>
<dbReference type="Gene3D" id="3.30.470.30">
    <property type="entry name" value="DNA ligase/mRNA capping enzyme"/>
    <property type="match status" value="1"/>
</dbReference>
<dbReference type="Gene3D" id="1.10.287.610">
    <property type="entry name" value="Helix hairpin bin"/>
    <property type="match status" value="1"/>
</dbReference>
<dbReference type="Gene3D" id="2.40.50.140">
    <property type="entry name" value="Nucleic acid-binding proteins"/>
    <property type="match status" value="1"/>
</dbReference>
<dbReference type="HAMAP" id="MF_01588">
    <property type="entry name" value="DNA_ligase_A"/>
    <property type="match status" value="1"/>
</dbReference>
<dbReference type="InterPro" id="IPR001357">
    <property type="entry name" value="BRCT_dom"/>
</dbReference>
<dbReference type="InterPro" id="IPR036420">
    <property type="entry name" value="BRCT_dom_sf"/>
</dbReference>
<dbReference type="InterPro" id="IPR041663">
    <property type="entry name" value="DisA/LigA_HHH"/>
</dbReference>
<dbReference type="InterPro" id="IPR001679">
    <property type="entry name" value="DNA_ligase"/>
</dbReference>
<dbReference type="InterPro" id="IPR018239">
    <property type="entry name" value="DNA_ligase_AS"/>
</dbReference>
<dbReference type="InterPro" id="IPR033136">
    <property type="entry name" value="DNA_ligase_CS"/>
</dbReference>
<dbReference type="InterPro" id="IPR013839">
    <property type="entry name" value="DNAligase_adenylation"/>
</dbReference>
<dbReference type="InterPro" id="IPR013840">
    <property type="entry name" value="DNAligase_N"/>
</dbReference>
<dbReference type="InterPro" id="IPR012340">
    <property type="entry name" value="NA-bd_OB-fold"/>
</dbReference>
<dbReference type="InterPro" id="IPR004150">
    <property type="entry name" value="NAD_DNA_ligase_OB"/>
</dbReference>
<dbReference type="InterPro" id="IPR010994">
    <property type="entry name" value="RuvA_2-like"/>
</dbReference>
<dbReference type="NCBIfam" id="TIGR00575">
    <property type="entry name" value="dnlj"/>
    <property type="match status" value="1"/>
</dbReference>
<dbReference type="NCBIfam" id="NF005932">
    <property type="entry name" value="PRK07956.1"/>
    <property type="match status" value="1"/>
</dbReference>
<dbReference type="PANTHER" id="PTHR23389">
    <property type="entry name" value="CHROMOSOME TRANSMISSION FIDELITY FACTOR 18"/>
    <property type="match status" value="1"/>
</dbReference>
<dbReference type="PANTHER" id="PTHR23389:SF9">
    <property type="entry name" value="DNA LIGASE"/>
    <property type="match status" value="1"/>
</dbReference>
<dbReference type="Pfam" id="PF00533">
    <property type="entry name" value="BRCT"/>
    <property type="match status" value="1"/>
</dbReference>
<dbReference type="Pfam" id="PF01653">
    <property type="entry name" value="DNA_ligase_aden"/>
    <property type="match status" value="1"/>
</dbReference>
<dbReference type="Pfam" id="PF03120">
    <property type="entry name" value="DNA_ligase_OB"/>
    <property type="match status" value="1"/>
</dbReference>
<dbReference type="Pfam" id="PF12826">
    <property type="entry name" value="HHH_2"/>
    <property type="match status" value="1"/>
</dbReference>
<dbReference type="PIRSF" id="PIRSF001604">
    <property type="entry name" value="LigA"/>
    <property type="match status" value="1"/>
</dbReference>
<dbReference type="SMART" id="SM00292">
    <property type="entry name" value="BRCT"/>
    <property type="match status" value="1"/>
</dbReference>
<dbReference type="SMART" id="SM00532">
    <property type="entry name" value="LIGANc"/>
    <property type="match status" value="1"/>
</dbReference>
<dbReference type="SUPFAM" id="SSF52113">
    <property type="entry name" value="BRCT domain"/>
    <property type="match status" value="1"/>
</dbReference>
<dbReference type="SUPFAM" id="SSF56091">
    <property type="entry name" value="DNA ligase/mRNA capping enzyme, catalytic domain"/>
    <property type="match status" value="1"/>
</dbReference>
<dbReference type="SUPFAM" id="SSF50249">
    <property type="entry name" value="Nucleic acid-binding proteins"/>
    <property type="match status" value="1"/>
</dbReference>
<dbReference type="SUPFAM" id="SSF47781">
    <property type="entry name" value="RuvA domain 2-like"/>
    <property type="match status" value="1"/>
</dbReference>
<dbReference type="PROSITE" id="PS50172">
    <property type="entry name" value="BRCT"/>
    <property type="match status" value="1"/>
</dbReference>
<dbReference type="PROSITE" id="PS01055">
    <property type="entry name" value="DNA_LIGASE_N1"/>
    <property type="match status" value="1"/>
</dbReference>
<dbReference type="PROSITE" id="PS01056">
    <property type="entry name" value="DNA_LIGASE_N2"/>
    <property type="match status" value="1"/>
</dbReference>
<name>DNLJ_BEII9</name>